<name>ZFAN3_HUMAN</name>
<comment type="interaction">
    <interactant intactId="EBI-725171">
        <id>Q9H8U3</id>
    </interactant>
    <interactant intactId="EBI-14240149">
        <id>B3EWG3</id>
        <label>FAM25A</label>
    </interactant>
    <organismsDiffer>false</organismsDiffer>
    <experiments>3</experiments>
</comment>
<comment type="interaction">
    <interactant intactId="EBI-725171">
        <id>Q9H8U3</id>
    </interactant>
    <interactant intactId="EBI-6509505">
        <id>Q0VD86</id>
        <label>INCA1</label>
    </interactant>
    <organismsDiffer>false</organismsDiffer>
    <experiments>3</experiments>
</comment>
<comment type="interaction">
    <interactant intactId="EBI-725171">
        <id>Q9H8U3</id>
    </interactant>
    <interactant intactId="EBI-12181987">
        <id>P50542-3</id>
        <label>PEX5</label>
    </interactant>
    <organismsDiffer>false</organismsDiffer>
    <experiments>3</experiments>
</comment>
<evidence type="ECO:0000255" key="1">
    <source>
        <dbReference type="PROSITE-ProRule" id="PRU00449"/>
    </source>
</evidence>
<evidence type="ECO:0000255" key="2">
    <source>
        <dbReference type="PROSITE-ProRule" id="PRU00451"/>
    </source>
</evidence>
<evidence type="ECO:0000256" key="3">
    <source>
        <dbReference type="SAM" id="MobiDB-lite"/>
    </source>
</evidence>
<evidence type="ECO:0007829" key="4">
    <source>
        <dbReference type="PDB" id="1X4W"/>
    </source>
</evidence>
<dbReference type="EMBL" id="AK023284">
    <property type="protein sequence ID" value="BAB14508.1"/>
    <property type="molecule type" value="mRNA"/>
</dbReference>
<dbReference type="EMBL" id="AL121574">
    <property type="status" value="NOT_ANNOTATED_CDS"/>
    <property type="molecule type" value="Genomic_DNA"/>
</dbReference>
<dbReference type="EMBL" id="AL133377">
    <property type="status" value="NOT_ANNOTATED_CDS"/>
    <property type="molecule type" value="Genomic_DNA"/>
</dbReference>
<dbReference type="EMBL" id="AL589655">
    <property type="status" value="NOT_ANNOTATED_CDS"/>
    <property type="molecule type" value="Genomic_DNA"/>
</dbReference>
<dbReference type="EMBL" id="BC031481">
    <property type="protein sequence ID" value="AAH31481.1"/>
    <property type="molecule type" value="mRNA"/>
</dbReference>
<dbReference type="CCDS" id="CCDS4836.1"/>
<dbReference type="RefSeq" id="NP_068762.1">
    <property type="nucleotide sequence ID" value="NM_021943.3"/>
</dbReference>
<dbReference type="PDB" id="1X4W">
    <property type="method" value="NMR"/>
    <property type="chains" value="A=147-200"/>
</dbReference>
<dbReference type="PDBsum" id="1X4W"/>
<dbReference type="SMR" id="Q9H8U3"/>
<dbReference type="BioGRID" id="121958">
    <property type="interactions" value="16"/>
</dbReference>
<dbReference type="FunCoup" id="Q9H8U3">
    <property type="interactions" value="1011"/>
</dbReference>
<dbReference type="IntAct" id="Q9H8U3">
    <property type="interactions" value="5"/>
</dbReference>
<dbReference type="STRING" id="9606.ENSP00000287218"/>
<dbReference type="GlyGen" id="Q9H8U3">
    <property type="glycosylation" value="1 site, 1 O-linked glycan (1 site)"/>
</dbReference>
<dbReference type="iPTMnet" id="Q9H8U3"/>
<dbReference type="PhosphoSitePlus" id="Q9H8U3"/>
<dbReference type="BioMuta" id="ZFAND3"/>
<dbReference type="DMDM" id="74733896"/>
<dbReference type="jPOST" id="Q9H8U3"/>
<dbReference type="MassIVE" id="Q9H8U3"/>
<dbReference type="PaxDb" id="9606-ENSP00000287218"/>
<dbReference type="PeptideAtlas" id="Q9H8U3"/>
<dbReference type="ProteomicsDB" id="81242"/>
<dbReference type="Pumba" id="Q9H8U3"/>
<dbReference type="Antibodypedia" id="15614">
    <property type="antibodies" value="196 antibodies from 23 providers"/>
</dbReference>
<dbReference type="DNASU" id="60685"/>
<dbReference type="Ensembl" id="ENST00000287218.9">
    <property type="protein sequence ID" value="ENSP00000287218.4"/>
    <property type="gene ID" value="ENSG00000156639.12"/>
</dbReference>
<dbReference type="GeneID" id="60685"/>
<dbReference type="KEGG" id="hsa:60685"/>
<dbReference type="MANE-Select" id="ENST00000287218.9">
    <property type="protein sequence ID" value="ENSP00000287218.4"/>
    <property type="RefSeq nucleotide sequence ID" value="NM_021943.3"/>
    <property type="RefSeq protein sequence ID" value="NP_068762.1"/>
</dbReference>
<dbReference type="UCSC" id="uc003onx.4">
    <property type="organism name" value="human"/>
</dbReference>
<dbReference type="AGR" id="HGNC:18019"/>
<dbReference type="CTD" id="60685"/>
<dbReference type="DisGeNET" id="60685"/>
<dbReference type="GeneCards" id="ZFAND3"/>
<dbReference type="HGNC" id="HGNC:18019">
    <property type="gene designation" value="ZFAND3"/>
</dbReference>
<dbReference type="HPA" id="ENSG00000156639">
    <property type="expression patterns" value="Low tissue specificity"/>
</dbReference>
<dbReference type="MIM" id="607455">
    <property type="type" value="gene"/>
</dbReference>
<dbReference type="neXtProt" id="NX_Q9H8U3"/>
<dbReference type="OpenTargets" id="ENSG00000156639"/>
<dbReference type="PharmGKB" id="PA38277"/>
<dbReference type="VEuPathDB" id="HostDB:ENSG00000156639"/>
<dbReference type="eggNOG" id="KOG3173">
    <property type="taxonomic scope" value="Eukaryota"/>
</dbReference>
<dbReference type="GeneTree" id="ENSGT00390000014679"/>
<dbReference type="InParanoid" id="Q9H8U3"/>
<dbReference type="OMA" id="IGRCKCD"/>
<dbReference type="OrthoDB" id="428577at2759"/>
<dbReference type="PAN-GO" id="Q9H8U3">
    <property type="GO annotations" value="0 GO annotations based on evolutionary models"/>
</dbReference>
<dbReference type="PhylomeDB" id="Q9H8U3"/>
<dbReference type="TreeFam" id="TF354281"/>
<dbReference type="PathwayCommons" id="Q9H8U3"/>
<dbReference type="SignaLink" id="Q9H8U3"/>
<dbReference type="BioGRID-ORCS" id="60685">
    <property type="hits" value="16 hits in 1163 CRISPR screens"/>
</dbReference>
<dbReference type="ChiTaRS" id="ZFAND3">
    <property type="organism name" value="human"/>
</dbReference>
<dbReference type="EvolutionaryTrace" id="Q9H8U3"/>
<dbReference type="GenomeRNAi" id="60685"/>
<dbReference type="Pharos" id="Q9H8U3">
    <property type="development level" value="Tbio"/>
</dbReference>
<dbReference type="PRO" id="PR:Q9H8U3"/>
<dbReference type="Proteomes" id="UP000005640">
    <property type="component" value="Chromosome 6"/>
</dbReference>
<dbReference type="RNAct" id="Q9H8U3">
    <property type="molecule type" value="protein"/>
</dbReference>
<dbReference type="Bgee" id="ENSG00000156639">
    <property type="expression patterns" value="Expressed in left testis and 197 other cell types or tissues"/>
</dbReference>
<dbReference type="ExpressionAtlas" id="Q9H8U3">
    <property type="expression patterns" value="baseline and differential"/>
</dbReference>
<dbReference type="GO" id="GO:0003677">
    <property type="term" value="F:DNA binding"/>
    <property type="evidence" value="ECO:0007669"/>
    <property type="project" value="InterPro"/>
</dbReference>
<dbReference type="GO" id="GO:0008270">
    <property type="term" value="F:zinc ion binding"/>
    <property type="evidence" value="ECO:0007669"/>
    <property type="project" value="UniProtKB-KW"/>
</dbReference>
<dbReference type="FunFam" id="4.10.1110.10:FF:000011">
    <property type="entry name" value="AN1-type zinc finger protein 3"/>
    <property type="match status" value="1"/>
</dbReference>
<dbReference type="Gene3D" id="1.20.5.4770">
    <property type="match status" value="1"/>
</dbReference>
<dbReference type="Gene3D" id="4.10.1110.10">
    <property type="entry name" value="AN1-like Zinc finger"/>
    <property type="match status" value="1"/>
</dbReference>
<dbReference type="InterPro" id="IPR035896">
    <property type="entry name" value="AN1-like_Znf"/>
</dbReference>
<dbReference type="InterPro" id="IPR050652">
    <property type="entry name" value="AN1_A20_ZnFinger"/>
</dbReference>
<dbReference type="InterPro" id="IPR002653">
    <property type="entry name" value="Znf_A20"/>
</dbReference>
<dbReference type="InterPro" id="IPR000058">
    <property type="entry name" value="Znf_AN1"/>
</dbReference>
<dbReference type="PANTHER" id="PTHR10634">
    <property type="entry name" value="AN1-TYPE ZINC FINGER PROTEIN"/>
    <property type="match status" value="1"/>
</dbReference>
<dbReference type="PANTHER" id="PTHR10634:SF67">
    <property type="entry name" value="AN1-TYPE ZINC FINGER PROTEIN 3"/>
    <property type="match status" value="1"/>
</dbReference>
<dbReference type="Pfam" id="PF01754">
    <property type="entry name" value="zf-A20"/>
    <property type="match status" value="1"/>
</dbReference>
<dbReference type="Pfam" id="PF01428">
    <property type="entry name" value="zf-AN1"/>
    <property type="match status" value="1"/>
</dbReference>
<dbReference type="SMART" id="SM00259">
    <property type="entry name" value="ZnF_A20"/>
    <property type="match status" value="1"/>
</dbReference>
<dbReference type="SMART" id="SM00154">
    <property type="entry name" value="ZnF_AN1"/>
    <property type="match status" value="1"/>
</dbReference>
<dbReference type="SUPFAM" id="SSF118310">
    <property type="entry name" value="AN1-like Zinc finger"/>
    <property type="match status" value="1"/>
</dbReference>
<dbReference type="SUPFAM" id="SSF57716">
    <property type="entry name" value="Glucocorticoid receptor-like (DNA-binding domain)"/>
    <property type="match status" value="1"/>
</dbReference>
<dbReference type="PROSITE" id="PS51036">
    <property type="entry name" value="ZF_A20"/>
    <property type="match status" value="1"/>
</dbReference>
<dbReference type="PROSITE" id="PS51039">
    <property type="entry name" value="ZF_AN1"/>
    <property type="match status" value="1"/>
</dbReference>
<accession>Q9H8U3</accession>
<accession>Q5SZZ0</accession>
<accession>Q5SZZ1</accession>
<feature type="chain" id="PRO_0000076370" description="AN1-type zinc finger protein 3">
    <location>
        <begin position="1"/>
        <end position="227"/>
    </location>
</feature>
<feature type="zinc finger region" description="A20-type" evidence="2">
    <location>
        <begin position="12"/>
        <end position="44"/>
    </location>
</feature>
<feature type="zinc finger region" description="AN1-type" evidence="1">
    <location>
        <begin position="151"/>
        <end position="200"/>
    </location>
</feature>
<feature type="region of interest" description="Disordered" evidence="3">
    <location>
        <begin position="41"/>
        <end position="100"/>
    </location>
</feature>
<feature type="region of interest" description="Disordered" evidence="3">
    <location>
        <begin position="113"/>
        <end position="148"/>
    </location>
</feature>
<feature type="compositionally biased region" description="Polar residues" evidence="3">
    <location>
        <begin position="49"/>
        <end position="59"/>
    </location>
</feature>
<feature type="compositionally biased region" description="Low complexity" evidence="3">
    <location>
        <begin position="66"/>
        <end position="77"/>
    </location>
</feature>
<feature type="compositionally biased region" description="Polar residues" evidence="3">
    <location>
        <begin position="78"/>
        <end position="94"/>
    </location>
</feature>
<feature type="compositionally biased region" description="Polar residues" evidence="3">
    <location>
        <begin position="113"/>
        <end position="127"/>
    </location>
</feature>
<feature type="compositionally biased region" description="Basic and acidic residues" evidence="3">
    <location>
        <begin position="135"/>
        <end position="148"/>
    </location>
</feature>
<feature type="binding site" evidence="2">
    <location>
        <position position="18"/>
    </location>
    <ligand>
        <name>Zn(2+)</name>
        <dbReference type="ChEBI" id="CHEBI:29105"/>
        <label>1</label>
    </ligand>
</feature>
<feature type="binding site" evidence="2">
    <location>
        <position position="20"/>
    </location>
    <ligand>
        <name>Zn(2+)</name>
        <dbReference type="ChEBI" id="CHEBI:29105"/>
        <label>1</label>
    </ligand>
</feature>
<feature type="binding site" evidence="2">
    <location>
        <position position="32"/>
    </location>
    <ligand>
        <name>Zn(2+)</name>
        <dbReference type="ChEBI" id="CHEBI:29105"/>
        <label>1</label>
    </ligand>
</feature>
<feature type="binding site" evidence="2">
    <location>
        <position position="35"/>
    </location>
    <ligand>
        <name>Zn(2+)</name>
        <dbReference type="ChEBI" id="CHEBI:29105"/>
        <label>1</label>
    </ligand>
</feature>
<feature type="binding site" evidence="1">
    <location>
        <position position="157"/>
    </location>
    <ligand>
        <name>Zn(2+)</name>
        <dbReference type="ChEBI" id="CHEBI:29105"/>
        <label>2</label>
    </ligand>
</feature>
<feature type="binding site" evidence="1">
    <location>
        <position position="160"/>
    </location>
    <ligand>
        <name>Zn(2+)</name>
        <dbReference type="ChEBI" id="CHEBI:29105"/>
        <label>2</label>
    </ligand>
</feature>
<feature type="binding site" evidence="1">
    <location>
        <position position="174"/>
    </location>
    <ligand>
        <name>Zn(2+)</name>
        <dbReference type="ChEBI" id="CHEBI:29105"/>
        <label>3</label>
    </ligand>
</feature>
<feature type="binding site" evidence="1">
    <location>
        <position position="176"/>
    </location>
    <ligand>
        <name>Zn(2+)</name>
        <dbReference type="ChEBI" id="CHEBI:29105"/>
        <label>3</label>
    </ligand>
</feature>
<feature type="binding site" evidence="1">
    <location>
        <position position="181"/>
    </location>
    <ligand>
        <name>Zn(2+)</name>
        <dbReference type="ChEBI" id="CHEBI:29105"/>
        <label>2</label>
    </ligand>
</feature>
<feature type="binding site" evidence="1">
    <location>
        <position position="184"/>
    </location>
    <ligand>
        <name>Zn(2+)</name>
        <dbReference type="ChEBI" id="CHEBI:29105"/>
        <label>2</label>
    </ligand>
</feature>
<feature type="binding site" evidence="1">
    <location>
        <position position="190"/>
    </location>
    <ligand>
        <name>Zn(2+)</name>
        <dbReference type="ChEBI" id="CHEBI:29105"/>
        <label>3</label>
    </ligand>
</feature>
<feature type="binding site" evidence="1">
    <location>
        <position position="192"/>
    </location>
    <ligand>
        <name>Zn(2+)</name>
        <dbReference type="ChEBI" id="CHEBI:29105"/>
        <label>3</label>
    </ligand>
</feature>
<feature type="strand" evidence="4">
    <location>
        <begin position="158"/>
        <end position="160"/>
    </location>
</feature>
<feature type="helix" evidence="4">
    <location>
        <begin position="166"/>
        <end position="172"/>
    </location>
</feature>
<feature type="strand" evidence="4">
    <location>
        <begin position="175"/>
        <end position="177"/>
    </location>
</feature>
<feature type="turn" evidence="4">
    <location>
        <begin position="182"/>
        <end position="184"/>
    </location>
</feature>
<feature type="helix" evidence="4">
    <location>
        <begin position="188"/>
        <end position="190"/>
    </location>
</feature>
<gene>
    <name type="primary">ZFAND3</name>
    <name type="synonym">TEX27</name>
</gene>
<keyword id="KW-0002">3D-structure</keyword>
<keyword id="KW-0479">Metal-binding</keyword>
<keyword id="KW-1267">Proteomics identification</keyword>
<keyword id="KW-1185">Reference proteome</keyword>
<keyword id="KW-0862">Zinc</keyword>
<keyword id="KW-0863">Zinc-finger</keyword>
<organism>
    <name type="scientific">Homo sapiens</name>
    <name type="common">Human</name>
    <dbReference type="NCBI Taxonomy" id="9606"/>
    <lineage>
        <taxon>Eukaryota</taxon>
        <taxon>Metazoa</taxon>
        <taxon>Chordata</taxon>
        <taxon>Craniata</taxon>
        <taxon>Vertebrata</taxon>
        <taxon>Euteleostomi</taxon>
        <taxon>Mammalia</taxon>
        <taxon>Eutheria</taxon>
        <taxon>Euarchontoglires</taxon>
        <taxon>Primates</taxon>
        <taxon>Haplorrhini</taxon>
        <taxon>Catarrhini</taxon>
        <taxon>Hominidae</taxon>
        <taxon>Homo</taxon>
    </lineage>
</organism>
<protein>
    <recommendedName>
        <fullName>AN1-type zinc finger protein 3</fullName>
    </recommendedName>
    <alternativeName>
        <fullName>Testis-expressed protein 27</fullName>
    </alternativeName>
</protein>
<sequence>MGDAGSERSKAPSLPPRCPCGFWGSSKTMNLCSKCFADFQKKQPDDDSAPSTSNSQSDLFSEETTSDNNNTSITTPTLSPSQQPLPTELNVTSPSKEECGPCTDTAHVSLITPTKRSCGTDSQSENEASPVKRPRLLENTERSEETSRSKQKSRRRCFQCQTKLELVQQELGSCRCGYVFCMLHRLPEQHDCTFDHMGRGREEAIMKMVKLDRKVGRSCQRIGEGCS</sequence>
<proteinExistence type="evidence at protein level"/>
<reference key="1">
    <citation type="journal article" date="2004" name="Nat. Genet.">
        <title>Complete sequencing and characterization of 21,243 full-length human cDNAs.</title>
        <authorList>
            <person name="Ota T."/>
            <person name="Suzuki Y."/>
            <person name="Nishikawa T."/>
            <person name="Otsuki T."/>
            <person name="Sugiyama T."/>
            <person name="Irie R."/>
            <person name="Wakamatsu A."/>
            <person name="Hayashi K."/>
            <person name="Sato H."/>
            <person name="Nagai K."/>
            <person name="Kimura K."/>
            <person name="Makita H."/>
            <person name="Sekine M."/>
            <person name="Obayashi M."/>
            <person name="Nishi T."/>
            <person name="Shibahara T."/>
            <person name="Tanaka T."/>
            <person name="Ishii S."/>
            <person name="Yamamoto J."/>
            <person name="Saito K."/>
            <person name="Kawai Y."/>
            <person name="Isono Y."/>
            <person name="Nakamura Y."/>
            <person name="Nagahari K."/>
            <person name="Murakami K."/>
            <person name="Yasuda T."/>
            <person name="Iwayanagi T."/>
            <person name="Wagatsuma M."/>
            <person name="Shiratori A."/>
            <person name="Sudo H."/>
            <person name="Hosoiri T."/>
            <person name="Kaku Y."/>
            <person name="Kodaira H."/>
            <person name="Kondo H."/>
            <person name="Sugawara M."/>
            <person name="Takahashi M."/>
            <person name="Kanda K."/>
            <person name="Yokoi T."/>
            <person name="Furuya T."/>
            <person name="Kikkawa E."/>
            <person name="Omura Y."/>
            <person name="Abe K."/>
            <person name="Kamihara K."/>
            <person name="Katsuta N."/>
            <person name="Sato K."/>
            <person name="Tanikawa M."/>
            <person name="Yamazaki M."/>
            <person name="Ninomiya K."/>
            <person name="Ishibashi T."/>
            <person name="Yamashita H."/>
            <person name="Murakawa K."/>
            <person name="Fujimori K."/>
            <person name="Tanai H."/>
            <person name="Kimata M."/>
            <person name="Watanabe M."/>
            <person name="Hiraoka S."/>
            <person name="Chiba Y."/>
            <person name="Ishida S."/>
            <person name="Ono Y."/>
            <person name="Takiguchi S."/>
            <person name="Watanabe S."/>
            <person name="Yosida M."/>
            <person name="Hotuta T."/>
            <person name="Kusano J."/>
            <person name="Kanehori K."/>
            <person name="Takahashi-Fujii A."/>
            <person name="Hara H."/>
            <person name="Tanase T.-O."/>
            <person name="Nomura Y."/>
            <person name="Togiya S."/>
            <person name="Komai F."/>
            <person name="Hara R."/>
            <person name="Takeuchi K."/>
            <person name="Arita M."/>
            <person name="Imose N."/>
            <person name="Musashino K."/>
            <person name="Yuuki H."/>
            <person name="Oshima A."/>
            <person name="Sasaki N."/>
            <person name="Aotsuka S."/>
            <person name="Yoshikawa Y."/>
            <person name="Matsunawa H."/>
            <person name="Ichihara T."/>
            <person name="Shiohata N."/>
            <person name="Sano S."/>
            <person name="Moriya S."/>
            <person name="Momiyama H."/>
            <person name="Satoh N."/>
            <person name="Takami S."/>
            <person name="Terashima Y."/>
            <person name="Suzuki O."/>
            <person name="Nakagawa S."/>
            <person name="Senoh A."/>
            <person name="Mizoguchi H."/>
            <person name="Goto Y."/>
            <person name="Shimizu F."/>
            <person name="Wakebe H."/>
            <person name="Hishigaki H."/>
            <person name="Watanabe T."/>
            <person name="Sugiyama A."/>
            <person name="Takemoto M."/>
            <person name="Kawakami B."/>
            <person name="Yamazaki M."/>
            <person name="Watanabe K."/>
            <person name="Kumagai A."/>
            <person name="Itakura S."/>
            <person name="Fukuzumi Y."/>
            <person name="Fujimori Y."/>
            <person name="Komiyama M."/>
            <person name="Tashiro H."/>
            <person name="Tanigami A."/>
            <person name="Fujiwara T."/>
            <person name="Ono T."/>
            <person name="Yamada K."/>
            <person name="Fujii Y."/>
            <person name="Ozaki K."/>
            <person name="Hirao M."/>
            <person name="Ohmori Y."/>
            <person name="Kawabata A."/>
            <person name="Hikiji T."/>
            <person name="Kobatake N."/>
            <person name="Inagaki H."/>
            <person name="Ikema Y."/>
            <person name="Okamoto S."/>
            <person name="Okitani R."/>
            <person name="Kawakami T."/>
            <person name="Noguchi S."/>
            <person name="Itoh T."/>
            <person name="Shigeta K."/>
            <person name="Senba T."/>
            <person name="Matsumura K."/>
            <person name="Nakajima Y."/>
            <person name="Mizuno T."/>
            <person name="Morinaga M."/>
            <person name="Sasaki M."/>
            <person name="Togashi T."/>
            <person name="Oyama M."/>
            <person name="Hata H."/>
            <person name="Watanabe M."/>
            <person name="Komatsu T."/>
            <person name="Mizushima-Sugano J."/>
            <person name="Satoh T."/>
            <person name="Shirai Y."/>
            <person name="Takahashi Y."/>
            <person name="Nakagawa K."/>
            <person name="Okumura K."/>
            <person name="Nagase T."/>
            <person name="Nomura N."/>
            <person name="Kikuchi H."/>
            <person name="Masuho Y."/>
            <person name="Yamashita R."/>
            <person name="Nakai K."/>
            <person name="Yada T."/>
            <person name="Nakamura Y."/>
            <person name="Ohara O."/>
            <person name="Isogai T."/>
            <person name="Sugano S."/>
        </authorList>
    </citation>
    <scope>NUCLEOTIDE SEQUENCE [LARGE SCALE MRNA]</scope>
</reference>
<reference key="2">
    <citation type="journal article" date="2003" name="Nature">
        <title>The DNA sequence and analysis of human chromosome 6.</title>
        <authorList>
            <person name="Mungall A.J."/>
            <person name="Palmer S.A."/>
            <person name="Sims S.K."/>
            <person name="Edwards C.A."/>
            <person name="Ashurst J.L."/>
            <person name="Wilming L."/>
            <person name="Jones M.C."/>
            <person name="Horton R."/>
            <person name="Hunt S.E."/>
            <person name="Scott C.E."/>
            <person name="Gilbert J.G.R."/>
            <person name="Clamp M.E."/>
            <person name="Bethel G."/>
            <person name="Milne S."/>
            <person name="Ainscough R."/>
            <person name="Almeida J.P."/>
            <person name="Ambrose K.D."/>
            <person name="Andrews T.D."/>
            <person name="Ashwell R.I.S."/>
            <person name="Babbage A.K."/>
            <person name="Bagguley C.L."/>
            <person name="Bailey J."/>
            <person name="Banerjee R."/>
            <person name="Barker D.J."/>
            <person name="Barlow K.F."/>
            <person name="Bates K."/>
            <person name="Beare D.M."/>
            <person name="Beasley H."/>
            <person name="Beasley O."/>
            <person name="Bird C.P."/>
            <person name="Blakey S.E."/>
            <person name="Bray-Allen S."/>
            <person name="Brook J."/>
            <person name="Brown A.J."/>
            <person name="Brown J.Y."/>
            <person name="Burford D.C."/>
            <person name="Burrill W."/>
            <person name="Burton J."/>
            <person name="Carder C."/>
            <person name="Carter N.P."/>
            <person name="Chapman J.C."/>
            <person name="Clark S.Y."/>
            <person name="Clark G."/>
            <person name="Clee C.M."/>
            <person name="Clegg S."/>
            <person name="Cobley V."/>
            <person name="Collier R.E."/>
            <person name="Collins J.E."/>
            <person name="Colman L.K."/>
            <person name="Corby N.R."/>
            <person name="Coville G.J."/>
            <person name="Culley K.M."/>
            <person name="Dhami P."/>
            <person name="Davies J."/>
            <person name="Dunn M."/>
            <person name="Earthrowl M.E."/>
            <person name="Ellington A.E."/>
            <person name="Evans K.A."/>
            <person name="Faulkner L."/>
            <person name="Francis M.D."/>
            <person name="Frankish A."/>
            <person name="Frankland J."/>
            <person name="French L."/>
            <person name="Garner P."/>
            <person name="Garnett J."/>
            <person name="Ghori M.J."/>
            <person name="Gilby L.M."/>
            <person name="Gillson C.J."/>
            <person name="Glithero R.J."/>
            <person name="Grafham D.V."/>
            <person name="Grant M."/>
            <person name="Gribble S."/>
            <person name="Griffiths C."/>
            <person name="Griffiths M.N.D."/>
            <person name="Hall R."/>
            <person name="Halls K.S."/>
            <person name="Hammond S."/>
            <person name="Harley J.L."/>
            <person name="Hart E.A."/>
            <person name="Heath P.D."/>
            <person name="Heathcott R."/>
            <person name="Holmes S.J."/>
            <person name="Howden P.J."/>
            <person name="Howe K.L."/>
            <person name="Howell G.R."/>
            <person name="Huckle E."/>
            <person name="Humphray S.J."/>
            <person name="Humphries M.D."/>
            <person name="Hunt A.R."/>
            <person name="Johnson C.M."/>
            <person name="Joy A.A."/>
            <person name="Kay M."/>
            <person name="Keenan S.J."/>
            <person name="Kimberley A.M."/>
            <person name="King A."/>
            <person name="Laird G.K."/>
            <person name="Langford C."/>
            <person name="Lawlor S."/>
            <person name="Leongamornlert D.A."/>
            <person name="Leversha M."/>
            <person name="Lloyd C.R."/>
            <person name="Lloyd D.M."/>
            <person name="Loveland J.E."/>
            <person name="Lovell J."/>
            <person name="Martin S."/>
            <person name="Mashreghi-Mohammadi M."/>
            <person name="Maslen G.L."/>
            <person name="Matthews L."/>
            <person name="McCann O.T."/>
            <person name="McLaren S.J."/>
            <person name="McLay K."/>
            <person name="McMurray A."/>
            <person name="Moore M.J.F."/>
            <person name="Mullikin J.C."/>
            <person name="Niblett D."/>
            <person name="Nickerson T."/>
            <person name="Novik K.L."/>
            <person name="Oliver K."/>
            <person name="Overton-Larty E.K."/>
            <person name="Parker A."/>
            <person name="Patel R."/>
            <person name="Pearce A.V."/>
            <person name="Peck A.I."/>
            <person name="Phillimore B.J.C.T."/>
            <person name="Phillips S."/>
            <person name="Plumb R.W."/>
            <person name="Porter K.M."/>
            <person name="Ramsey Y."/>
            <person name="Ranby S.A."/>
            <person name="Rice C.M."/>
            <person name="Ross M.T."/>
            <person name="Searle S.M."/>
            <person name="Sehra H.K."/>
            <person name="Sheridan E."/>
            <person name="Skuce C.D."/>
            <person name="Smith S."/>
            <person name="Smith M."/>
            <person name="Spraggon L."/>
            <person name="Squares S.L."/>
            <person name="Steward C.A."/>
            <person name="Sycamore N."/>
            <person name="Tamlyn-Hall G."/>
            <person name="Tester J."/>
            <person name="Theaker A.J."/>
            <person name="Thomas D.W."/>
            <person name="Thorpe A."/>
            <person name="Tracey A."/>
            <person name="Tromans A."/>
            <person name="Tubby B."/>
            <person name="Wall M."/>
            <person name="Wallis J.M."/>
            <person name="West A.P."/>
            <person name="White S.S."/>
            <person name="Whitehead S.L."/>
            <person name="Whittaker H."/>
            <person name="Wild A."/>
            <person name="Willey D.J."/>
            <person name="Wilmer T.E."/>
            <person name="Wood J.M."/>
            <person name="Wray P.W."/>
            <person name="Wyatt J.C."/>
            <person name="Young L."/>
            <person name="Younger R.M."/>
            <person name="Bentley D.R."/>
            <person name="Coulson A."/>
            <person name="Durbin R.M."/>
            <person name="Hubbard T."/>
            <person name="Sulston J.E."/>
            <person name="Dunham I."/>
            <person name="Rogers J."/>
            <person name="Beck S."/>
        </authorList>
    </citation>
    <scope>NUCLEOTIDE SEQUENCE [LARGE SCALE GENOMIC DNA]</scope>
</reference>
<reference key="3">
    <citation type="journal article" date="2004" name="Genome Res.">
        <title>The status, quality, and expansion of the NIH full-length cDNA project: the Mammalian Gene Collection (MGC).</title>
        <authorList>
            <consortium name="The MGC Project Team"/>
        </authorList>
    </citation>
    <scope>NUCLEOTIDE SEQUENCE [LARGE SCALE MRNA]</scope>
    <source>
        <tissue>Kidney</tissue>
    </source>
</reference>
<reference key="4">
    <citation type="submission" date="2005-11" db="PDB data bank">
        <title>Solution structure of the ZF-AN1 domain from human hypothetical protein FLJ13222.</title>
        <authorList>
            <consortium name="RIKEN structural genomics initiative (RSGI)"/>
        </authorList>
    </citation>
    <scope>STRUCTURE BY NMR OF 147-200 IN COMPLEX WITH ZINC IONS</scope>
</reference>